<dbReference type="EC" id="3.1.-.-"/>
<dbReference type="EMBL" id="AL123456">
    <property type="protein sequence ID" value="CCP44723.1"/>
    <property type="molecule type" value="Genomic_DNA"/>
</dbReference>
<dbReference type="PIR" id="G70638">
    <property type="entry name" value="G70638"/>
</dbReference>
<dbReference type="RefSeq" id="NP_216471.2">
    <property type="nucleotide sequence ID" value="NC_000962.3"/>
</dbReference>
<dbReference type="RefSeq" id="WP_010886136.1">
    <property type="nucleotide sequence ID" value="NZ_NVQJ01000048.1"/>
</dbReference>
<dbReference type="PDB" id="7AWK">
    <property type="method" value="X-ray"/>
    <property type="resolution" value="1.91 A"/>
    <property type="chains" value="A=1-125"/>
</dbReference>
<dbReference type="PDB" id="7NBU">
    <property type="method" value="EM"/>
    <property type="resolution" value="3.11 A"/>
    <property type="chains" value="Y=7-125"/>
</dbReference>
<dbReference type="PDBsum" id="7AWK"/>
<dbReference type="PDBsum" id="7NBU"/>
<dbReference type="EMDB" id="EMD-12261"/>
<dbReference type="SMR" id="P9WJA5"/>
<dbReference type="STRING" id="83332.Rv1955"/>
<dbReference type="PaxDb" id="83332-Rv1955"/>
<dbReference type="DNASU" id="885966"/>
<dbReference type="GeneID" id="885966"/>
<dbReference type="KEGG" id="mtu:Rv1955"/>
<dbReference type="PATRIC" id="fig|83332.12.peg.2183"/>
<dbReference type="TubercuList" id="Rv1955"/>
<dbReference type="eggNOG" id="COG4679">
    <property type="taxonomic scope" value="Bacteria"/>
</dbReference>
<dbReference type="InParanoid" id="P9WJA5"/>
<dbReference type="OrthoDB" id="5192540at2"/>
<dbReference type="PHI-base" id="PHI:12002"/>
<dbReference type="Proteomes" id="UP000001584">
    <property type="component" value="Chromosome"/>
</dbReference>
<dbReference type="GO" id="GO:0004521">
    <property type="term" value="F:RNA endonuclease activity"/>
    <property type="evidence" value="ECO:0000314"/>
    <property type="project" value="UniProtKB"/>
</dbReference>
<dbReference type="GO" id="GO:0098754">
    <property type="term" value="P:detoxification"/>
    <property type="evidence" value="ECO:0000315"/>
    <property type="project" value="MTBBASE"/>
</dbReference>
<dbReference type="GO" id="GO:0045926">
    <property type="term" value="P:negative regulation of growth"/>
    <property type="evidence" value="ECO:0000315"/>
    <property type="project" value="MTBBASE"/>
</dbReference>
<dbReference type="GO" id="GO:0001666">
    <property type="term" value="P:response to hypoxia"/>
    <property type="evidence" value="ECO:0000270"/>
    <property type="project" value="MTBBASE"/>
</dbReference>
<dbReference type="InterPro" id="IPR009241">
    <property type="entry name" value="HigB-like"/>
</dbReference>
<dbReference type="Pfam" id="PF05973">
    <property type="entry name" value="Gp49"/>
    <property type="match status" value="1"/>
</dbReference>
<protein>
    <recommendedName>
        <fullName evidence="9">Probable endoribonuclease HigB1</fullName>
        <ecNumber>3.1.-.-</ecNumber>
    </recommendedName>
    <alternativeName>
        <fullName evidence="8">Toxin HigB1</fullName>
    </alternativeName>
</protein>
<reference key="1">
    <citation type="journal article" date="1998" name="Nature">
        <title>Deciphering the biology of Mycobacterium tuberculosis from the complete genome sequence.</title>
        <authorList>
            <person name="Cole S.T."/>
            <person name="Brosch R."/>
            <person name="Parkhill J."/>
            <person name="Garnier T."/>
            <person name="Churcher C.M."/>
            <person name="Harris D.E."/>
            <person name="Gordon S.V."/>
            <person name="Eiglmeier K."/>
            <person name="Gas S."/>
            <person name="Barry C.E. III"/>
            <person name="Tekaia F."/>
            <person name="Badcock K."/>
            <person name="Basham D."/>
            <person name="Brown D."/>
            <person name="Chillingworth T."/>
            <person name="Connor R."/>
            <person name="Davies R.M."/>
            <person name="Devlin K."/>
            <person name="Feltwell T."/>
            <person name="Gentles S."/>
            <person name="Hamlin N."/>
            <person name="Holroyd S."/>
            <person name="Hornsby T."/>
            <person name="Jagels K."/>
            <person name="Krogh A."/>
            <person name="McLean J."/>
            <person name="Moule S."/>
            <person name="Murphy L.D."/>
            <person name="Oliver S."/>
            <person name="Osborne J."/>
            <person name="Quail M.A."/>
            <person name="Rajandream M.A."/>
            <person name="Rogers J."/>
            <person name="Rutter S."/>
            <person name="Seeger K."/>
            <person name="Skelton S."/>
            <person name="Squares S."/>
            <person name="Squares R."/>
            <person name="Sulston J.E."/>
            <person name="Taylor K."/>
            <person name="Whitehead S."/>
            <person name="Barrell B.G."/>
        </authorList>
    </citation>
    <scope>NUCLEOTIDE SEQUENCE [LARGE SCALE GENOMIC DNA]</scope>
    <source>
        <strain>ATCC 25618 / H37Rv</strain>
    </source>
</reference>
<reference key="2">
    <citation type="journal article" date="2005" name="Nucleic Acids Res.">
        <title>Toxin-antitoxin loci are highly abundant in free-living but lost from host-associated prokaryotes.</title>
        <authorList>
            <person name="Pandey D.P."/>
            <person name="Gerdes K."/>
        </authorList>
    </citation>
    <scope>IDENTIFICATION</scope>
    <scope>POSSIBLE FUNCTION</scope>
    <source>
        <strain>ATCC 25618 / H37Rv</strain>
    </source>
</reference>
<reference key="3">
    <citation type="journal article" date="2009" name="FEMS Microbiol. Lett.">
        <title>Killing activity and rescue function of genome-wide toxin-antitoxin loci of Mycobacterium tuberculosis.</title>
        <authorList>
            <person name="Gupta A."/>
        </authorList>
    </citation>
    <scope>EXPRESSION IN E.COLI</scope>
    <scope>FUNCTION AS AN ANTITOXIN</scope>
    <source>
        <strain>ATCC 25618 / H37Rv</strain>
    </source>
</reference>
<reference key="4">
    <citation type="journal article" date="2009" name="Microbiology">
        <title>Experimental determination of translational start sites resolves uncertainties in genomic open reading frame predictions - application to Mycobacterium tuberculosis.</title>
        <authorList>
            <person name="Smollett K.L."/>
            <person name="Fivian-Hughes A.S."/>
            <person name="Smith J.E."/>
            <person name="Chang A."/>
            <person name="Rao T."/>
            <person name="Davis E.O."/>
        </authorList>
    </citation>
    <scope>START SITE IDENTIFICATION</scope>
    <scope>INDUCTION</scope>
    <scope>OPERON STRUCTURE</scope>
    <source>
        <strain>ATCC 25618 / H37Rv</strain>
    </source>
</reference>
<reference key="5">
    <citation type="journal article" date="2009" name="PLoS Genet.">
        <title>Comprehensive functional analysis of Mycobacterium tuberculosis toxin-antitoxin systems: implications for pathogenesis, stress responses, and evolution.</title>
        <authorList>
            <person name="Ramage H.R."/>
            <person name="Connolly L.E."/>
            <person name="Cox J.S."/>
        </authorList>
    </citation>
    <scope>EXPRESSION IN M.SMEGMATIS</scope>
    <scope>FUNCTION AS A TOXIN</scope>
    <scope>INDUCTION BY HYPOXIA</scope>
    <source>
        <strain>ATCC 35801 / TMC 107 / Erdman</strain>
    </source>
</reference>
<reference key="6">
    <citation type="journal article" date="2010" name="J. Bacteriol.">
        <title>Analyzing the regulatory role of the HigA antitoxin within Mycobacterium tuberculosis.</title>
        <authorList>
            <person name="Fivian-Hughes A.S."/>
            <person name="Davis E.O."/>
        </authorList>
    </citation>
    <scope>PROBABLE FUNCTION AS A TOXIN</scope>
    <scope>INDUCTION</scope>
    <scope>DISRUPTION PHENOTYPE</scope>
    <source>
        <strain>ATCC 25618 / H37Rv</strain>
    </source>
</reference>
<reference key="7">
    <citation type="journal article" date="2011" name="MBio">
        <title>Characterization and transcriptome analysis of Mycobacterium tuberculosis persisters.</title>
        <authorList>
            <person name="Keren I."/>
            <person name="Minami S."/>
            <person name="Rubin E."/>
            <person name="Lewis K."/>
        </authorList>
    </citation>
    <scope>INDUCTION IN PERSISTER CELLS</scope>
    <source>
        <strain>ATCC 25618 / H37Rv</strain>
    </source>
</reference>
<reference key="8">
    <citation type="journal article" date="2011" name="Proc. Natl. Acad. Sci. U.S.A.">
        <title>SecB-like chaperone controls a toxin-antitoxin stress-responsive system in Mycobacterium tuberculosis.</title>
        <authorList>
            <person name="Bordes P."/>
            <person name="Cirinesi A.M."/>
            <person name="Ummels R."/>
            <person name="Sala A."/>
            <person name="Sakr S."/>
            <person name="Bitter W."/>
            <person name="Genevaux P."/>
        </authorList>
    </citation>
    <scope>FUNCTION AS A TOXIN</scope>
    <scope>EXPRESSION IN E.COLI AND M.MARINUM</scope>
    <source>
        <strain>ATCC 25618 / H37Rv</strain>
    </source>
</reference>
<reference key="9">
    <citation type="journal article" date="2013" name="Mol. Microbiol.">
        <title>Induced ectopic expression of HigB toxin in Mycobacterium tuberculosis results in growth inhibition, reduced abundance of a subset of mRNAs and cleavage of tmRNA.</title>
        <authorList>
            <person name="Schuessler D.L."/>
            <person name="Cortes T."/>
            <person name="Fivian-Hughes A.S."/>
            <person name="Lougheed K.E."/>
            <person name="Harvey E."/>
            <person name="Buxton R.S."/>
            <person name="Davis E.O."/>
            <person name="Young D.B."/>
        </authorList>
    </citation>
    <scope>FUNCTION</scope>
    <scope>EXPRESSION IN M.SMEGMATIS AND M.TUBERCULOSIS</scope>
</reference>
<reference key="10">
    <citation type="journal article" date="2014" name="Toxins">
        <title>Multiple toxin-antitoxin systems in Mycobacterium tuberculosis.</title>
        <authorList>
            <person name="Sala A."/>
            <person name="Bordes P."/>
            <person name="Genevaux P."/>
        </authorList>
    </citation>
    <scope>DISCUSSION OF FUNCTION</scope>
    <source>
        <strain>ATCC 25618 / H37Rv</strain>
    </source>
</reference>
<accession>P9WJA5</accession>
<accession>L0T8D1</accession>
<accession>P95259</accession>
<accession>Q7D7P9</accession>
<name>HIGB1_MYCTU</name>
<gene>
    <name evidence="9" type="primary">higB1</name>
    <name type="synonym">higB</name>
    <name type="ordered locus">Rv1955</name>
</gene>
<evidence type="ECO:0000269" key="1">
    <source>
    </source>
</evidence>
<evidence type="ECO:0000269" key="2">
    <source>
    </source>
</evidence>
<evidence type="ECO:0000269" key="3">
    <source>
    </source>
</evidence>
<evidence type="ECO:0000269" key="4">
    <source>
    </source>
</evidence>
<evidence type="ECO:0000269" key="5">
    <source>
    </source>
</evidence>
<evidence type="ECO:0000269" key="6">
    <source>
    </source>
</evidence>
<evidence type="ECO:0000269" key="7">
    <source>
    </source>
</evidence>
<evidence type="ECO:0000303" key="8">
    <source>
    </source>
</evidence>
<evidence type="ECO:0000303" key="9">
    <source>
    </source>
</evidence>
<evidence type="ECO:0000305" key="10"/>
<evidence type="ECO:0000305" key="11">
    <source>
    </source>
</evidence>
<evidence type="ECO:0007829" key="12">
    <source>
        <dbReference type="PDB" id="7AWK"/>
    </source>
</evidence>
<organism>
    <name type="scientific">Mycobacterium tuberculosis (strain ATCC 25618 / H37Rv)</name>
    <dbReference type="NCBI Taxonomy" id="83332"/>
    <lineage>
        <taxon>Bacteria</taxon>
        <taxon>Bacillati</taxon>
        <taxon>Actinomycetota</taxon>
        <taxon>Actinomycetes</taxon>
        <taxon>Mycobacteriales</taxon>
        <taxon>Mycobacteriaceae</taxon>
        <taxon>Mycobacterium</taxon>
        <taxon>Mycobacterium tuberculosis complex</taxon>
    </lineage>
</organism>
<feature type="chain" id="PRO_0000407370" description="Probable endoribonuclease HigB1">
    <location>
        <begin position="1"/>
        <end position="125"/>
    </location>
</feature>
<feature type="helix" evidence="12">
    <location>
        <begin position="24"/>
        <end position="30"/>
    </location>
</feature>
<feature type="helix" evidence="12">
    <location>
        <begin position="34"/>
        <end position="49"/>
    </location>
</feature>
<feature type="helix" evidence="12">
    <location>
        <begin position="54"/>
        <end position="56"/>
    </location>
</feature>
<feature type="strand" evidence="12">
    <location>
        <begin position="57"/>
        <end position="61"/>
    </location>
</feature>
<feature type="strand" evidence="12">
    <location>
        <begin position="64"/>
        <end position="68"/>
    </location>
</feature>
<feature type="helix" evidence="12">
    <location>
        <begin position="70"/>
        <end position="72"/>
    </location>
</feature>
<feature type="strand" evidence="12">
    <location>
        <begin position="76"/>
        <end position="83"/>
    </location>
</feature>
<feature type="strand" evidence="12">
    <location>
        <begin position="86"/>
        <end position="94"/>
    </location>
</feature>
<feature type="strand" evidence="12">
    <location>
        <begin position="96"/>
        <end position="99"/>
    </location>
</feature>
<feature type="helix" evidence="12">
    <location>
        <begin position="102"/>
        <end position="119"/>
    </location>
</feature>
<keyword id="KW-0002">3D-structure</keyword>
<keyword id="KW-0255">Endonuclease</keyword>
<keyword id="KW-0378">Hydrolase</keyword>
<keyword id="KW-0540">Nuclease</keyword>
<keyword id="KW-1185">Reference proteome</keyword>
<keyword id="KW-1277">Toxin-antitoxin system</keyword>
<proteinExistence type="evidence at protein level"/>
<sequence length="125" mass="14430">MPPPDPAAMGTWKFFRASVDGRPVFKKEFDKLPDQARAALIVLMQRYLVGDLAAGSIKPIRGDILELRWHEANNHFRVLFFRWGQHPVALTAFYKNQQKTPKTKIETALDRQKIWKRAFGDTPPI</sequence>
<comment type="function">
    <text evidence="1 3 5 7">Toxic component of an atypical, type II toxin-antitoxin chaperone (TAC) system. Upon expression in M.smegmatis inhibits colony formation and cell growth (PubMed:20011113, PubMed:23927792). Ectopic expression in wild-type M.tuberculosis has no effect on cell growth; ectopic expression in a triple higB1-higA1-Rv1957 (delta TAC) disruption mutant causes growth arrest, killing a considerable proportion of the cells. Increased ectopic expression leads to decreased levels of IdeR- and Zur-regulated genes as well as cleavage within the mRNA region of tmRNA (transfer-mRNA), strongly suggesting it is an endoribonuclease; also degrades E.coli and M-smegmatis tmRNA (PubMed:23927792). Its toxic effect is neutralized by coexpression with antitoxin HigA. Neutralization of HigB1 toxin in E.coli or M.marinum also requires SecB-like chaperone Rv1957, making this the first toxin-antitoxin chaperone (TAC) system (PubMed:21536872).</text>
</comment>
<comment type="induction">
    <text evidence="2 3 4 6">Induced by hypoxia and by DNA damaging agent mitomycin C. Part of the Rv1954A-higB1-higA1-Rv1957 operon, as well as the higB1-higA1-Rv1957 operon, which is probably the mitomycin-induced operon; the former but not latter operon is autorepressed by HigA1 (PubMed:20585061). Induced in persister cells in response to D-cycloserine (PubMed:21673191).</text>
</comment>
<comment type="disruption phenotype">
    <text evidence="4">A triple higB1-higA1-Rv1957 disruption mutant has no visible phenotype.</text>
</comment>
<comment type="similarity">
    <text evidence="10">Belongs to the mycobacterial HigB family.</text>
</comment>
<comment type="caution">
    <text evidence="11">Upon expression in E.coli, Rv1955 has been shown to function as an antitoxin against Rv1956 (PubMed:19016878). It is not clear if these conflicting results are due to expression in a heterologous system. The gene names higA and higB have been assigned to both Rv1955 and Rv1956; we have chosen to call Rv1955 higB1 after consulting the authors.</text>
</comment>